<reference key="1">
    <citation type="journal article" date="2009" name="BMC Genomics">
        <title>Metabolic analysis of the soil microbe Dechloromonas aromatica str. RCB: indications of a surprisingly complex life-style and cryptic anaerobic pathways for aromatic degradation.</title>
        <authorList>
            <person name="Salinero K.K."/>
            <person name="Keller K."/>
            <person name="Feil W.S."/>
            <person name="Feil H."/>
            <person name="Trong S."/>
            <person name="Di Bartolo G."/>
            <person name="Lapidus A."/>
        </authorList>
    </citation>
    <scope>NUCLEOTIDE SEQUENCE [LARGE SCALE GENOMIC DNA]</scope>
    <source>
        <strain>RCB</strain>
    </source>
</reference>
<organism>
    <name type="scientific">Dechloromonas aromatica (strain RCB)</name>
    <dbReference type="NCBI Taxonomy" id="159087"/>
    <lineage>
        <taxon>Bacteria</taxon>
        <taxon>Pseudomonadati</taxon>
        <taxon>Pseudomonadota</taxon>
        <taxon>Betaproteobacteria</taxon>
        <taxon>Rhodocyclales</taxon>
        <taxon>Azonexaceae</taxon>
        <taxon>Dechloromonas</taxon>
    </lineage>
</organism>
<sequence length="427" mass="45720">MSSIVDVIAREILDSRGNPTVEADVLLESGVMGRAAVPSGASTGTREAIELRDGDASRYLGKGVMQAVENVNTEISEAIIGLDAQEQAFIDQTMIDLDGTDNKSRLGANAILAVSMAVAKAAAEESGLPLYRYFGGMSPMQMPVPMMNIINGGEHANNSLDIQEFMVMPVGAANIREAIRCGAEIFHALKKLLNKKGHSTAVGDEGGFAPNLGSHAEALQIIMEAIEIAGYVPGQDVLLALDCAASEFYKDGKYKLAGEGLELTSAQFVDYLANLADQFPIVSIEDGMSEADWDGWKLLTDRLGDKVQIVGDDIFVTNTKIFKEGIKKGIGNSILIKINQIGTLSETFAAVEMAKRAGYTAVISHRSGETEDSTIADIAVGLNAGQIKTGSLSRSDRIAKYNQLIRIEEDLGDTASYPGRETFYNLR</sequence>
<proteinExistence type="inferred from homology"/>
<dbReference type="EC" id="4.2.1.11" evidence="1"/>
<dbReference type="EMBL" id="CP000089">
    <property type="protein sequence ID" value="AAZ47100.1"/>
    <property type="molecule type" value="Genomic_DNA"/>
</dbReference>
<dbReference type="SMR" id="Q47DI1"/>
<dbReference type="STRING" id="159087.Daro_2364"/>
<dbReference type="KEGG" id="dar:Daro_2364"/>
<dbReference type="eggNOG" id="COG0148">
    <property type="taxonomic scope" value="Bacteria"/>
</dbReference>
<dbReference type="HOGENOM" id="CLU_031223_2_1_4"/>
<dbReference type="OrthoDB" id="9804716at2"/>
<dbReference type="UniPathway" id="UPA00109">
    <property type="reaction ID" value="UER00187"/>
</dbReference>
<dbReference type="GO" id="GO:0009986">
    <property type="term" value="C:cell surface"/>
    <property type="evidence" value="ECO:0007669"/>
    <property type="project" value="UniProtKB-SubCell"/>
</dbReference>
<dbReference type="GO" id="GO:0005576">
    <property type="term" value="C:extracellular region"/>
    <property type="evidence" value="ECO:0007669"/>
    <property type="project" value="UniProtKB-SubCell"/>
</dbReference>
<dbReference type="GO" id="GO:0000015">
    <property type="term" value="C:phosphopyruvate hydratase complex"/>
    <property type="evidence" value="ECO:0007669"/>
    <property type="project" value="InterPro"/>
</dbReference>
<dbReference type="GO" id="GO:0000287">
    <property type="term" value="F:magnesium ion binding"/>
    <property type="evidence" value="ECO:0007669"/>
    <property type="project" value="UniProtKB-UniRule"/>
</dbReference>
<dbReference type="GO" id="GO:0004634">
    <property type="term" value="F:phosphopyruvate hydratase activity"/>
    <property type="evidence" value="ECO:0007669"/>
    <property type="project" value="UniProtKB-UniRule"/>
</dbReference>
<dbReference type="GO" id="GO:0006096">
    <property type="term" value="P:glycolytic process"/>
    <property type="evidence" value="ECO:0007669"/>
    <property type="project" value="UniProtKB-UniRule"/>
</dbReference>
<dbReference type="CDD" id="cd03313">
    <property type="entry name" value="enolase"/>
    <property type="match status" value="1"/>
</dbReference>
<dbReference type="FunFam" id="3.20.20.120:FF:000001">
    <property type="entry name" value="Enolase"/>
    <property type="match status" value="1"/>
</dbReference>
<dbReference type="FunFam" id="3.30.390.10:FF:000001">
    <property type="entry name" value="Enolase"/>
    <property type="match status" value="1"/>
</dbReference>
<dbReference type="Gene3D" id="3.20.20.120">
    <property type="entry name" value="Enolase-like C-terminal domain"/>
    <property type="match status" value="1"/>
</dbReference>
<dbReference type="Gene3D" id="3.30.390.10">
    <property type="entry name" value="Enolase-like, N-terminal domain"/>
    <property type="match status" value="1"/>
</dbReference>
<dbReference type="HAMAP" id="MF_00318">
    <property type="entry name" value="Enolase"/>
    <property type="match status" value="1"/>
</dbReference>
<dbReference type="InterPro" id="IPR000941">
    <property type="entry name" value="Enolase"/>
</dbReference>
<dbReference type="InterPro" id="IPR036849">
    <property type="entry name" value="Enolase-like_C_sf"/>
</dbReference>
<dbReference type="InterPro" id="IPR029017">
    <property type="entry name" value="Enolase-like_N"/>
</dbReference>
<dbReference type="InterPro" id="IPR020810">
    <property type="entry name" value="Enolase_C"/>
</dbReference>
<dbReference type="InterPro" id="IPR020809">
    <property type="entry name" value="Enolase_CS"/>
</dbReference>
<dbReference type="InterPro" id="IPR020811">
    <property type="entry name" value="Enolase_N"/>
</dbReference>
<dbReference type="NCBIfam" id="TIGR01060">
    <property type="entry name" value="eno"/>
    <property type="match status" value="1"/>
</dbReference>
<dbReference type="PANTHER" id="PTHR11902">
    <property type="entry name" value="ENOLASE"/>
    <property type="match status" value="1"/>
</dbReference>
<dbReference type="PANTHER" id="PTHR11902:SF1">
    <property type="entry name" value="ENOLASE"/>
    <property type="match status" value="1"/>
</dbReference>
<dbReference type="Pfam" id="PF00113">
    <property type="entry name" value="Enolase_C"/>
    <property type="match status" value="1"/>
</dbReference>
<dbReference type="Pfam" id="PF03952">
    <property type="entry name" value="Enolase_N"/>
    <property type="match status" value="1"/>
</dbReference>
<dbReference type="PIRSF" id="PIRSF001400">
    <property type="entry name" value="Enolase"/>
    <property type="match status" value="1"/>
</dbReference>
<dbReference type="PRINTS" id="PR00148">
    <property type="entry name" value="ENOLASE"/>
</dbReference>
<dbReference type="SFLD" id="SFLDS00001">
    <property type="entry name" value="Enolase"/>
    <property type="match status" value="1"/>
</dbReference>
<dbReference type="SFLD" id="SFLDF00002">
    <property type="entry name" value="enolase"/>
    <property type="match status" value="1"/>
</dbReference>
<dbReference type="SMART" id="SM01192">
    <property type="entry name" value="Enolase_C"/>
    <property type="match status" value="1"/>
</dbReference>
<dbReference type="SMART" id="SM01193">
    <property type="entry name" value="Enolase_N"/>
    <property type="match status" value="1"/>
</dbReference>
<dbReference type="SUPFAM" id="SSF51604">
    <property type="entry name" value="Enolase C-terminal domain-like"/>
    <property type="match status" value="1"/>
</dbReference>
<dbReference type="SUPFAM" id="SSF54826">
    <property type="entry name" value="Enolase N-terminal domain-like"/>
    <property type="match status" value="1"/>
</dbReference>
<dbReference type="PROSITE" id="PS00164">
    <property type="entry name" value="ENOLASE"/>
    <property type="match status" value="1"/>
</dbReference>
<comment type="function">
    <text evidence="1">Catalyzes the reversible conversion of 2-phosphoglycerate (2-PG) into phosphoenolpyruvate (PEP). It is essential for the degradation of carbohydrates via glycolysis.</text>
</comment>
<comment type="catalytic activity">
    <reaction evidence="1">
        <text>(2R)-2-phosphoglycerate = phosphoenolpyruvate + H2O</text>
        <dbReference type="Rhea" id="RHEA:10164"/>
        <dbReference type="ChEBI" id="CHEBI:15377"/>
        <dbReference type="ChEBI" id="CHEBI:58289"/>
        <dbReference type="ChEBI" id="CHEBI:58702"/>
        <dbReference type="EC" id="4.2.1.11"/>
    </reaction>
</comment>
<comment type="cofactor">
    <cofactor evidence="1">
        <name>Mg(2+)</name>
        <dbReference type="ChEBI" id="CHEBI:18420"/>
    </cofactor>
    <text evidence="1">Binds a second Mg(2+) ion via substrate during catalysis.</text>
</comment>
<comment type="pathway">
    <text evidence="1">Carbohydrate degradation; glycolysis; pyruvate from D-glyceraldehyde 3-phosphate: step 4/5.</text>
</comment>
<comment type="subcellular location">
    <subcellularLocation>
        <location evidence="1">Cytoplasm</location>
    </subcellularLocation>
    <subcellularLocation>
        <location evidence="1">Secreted</location>
    </subcellularLocation>
    <subcellularLocation>
        <location evidence="1">Cell surface</location>
    </subcellularLocation>
    <text evidence="1">Fractions of enolase are present in both the cytoplasm and on the cell surface.</text>
</comment>
<comment type="similarity">
    <text evidence="1">Belongs to the enolase family.</text>
</comment>
<keyword id="KW-0963">Cytoplasm</keyword>
<keyword id="KW-0324">Glycolysis</keyword>
<keyword id="KW-0456">Lyase</keyword>
<keyword id="KW-0460">Magnesium</keyword>
<keyword id="KW-0479">Metal-binding</keyword>
<keyword id="KW-0964">Secreted</keyword>
<accession>Q47DI1</accession>
<evidence type="ECO:0000255" key="1">
    <source>
        <dbReference type="HAMAP-Rule" id="MF_00318"/>
    </source>
</evidence>
<name>ENO_DECAR</name>
<feature type="chain" id="PRO_0000267024" description="Enolase">
    <location>
        <begin position="1"/>
        <end position="427"/>
    </location>
</feature>
<feature type="active site" description="Proton donor" evidence="1">
    <location>
        <position position="205"/>
    </location>
</feature>
<feature type="active site" description="Proton acceptor" evidence="1">
    <location>
        <position position="337"/>
    </location>
</feature>
<feature type="binding site" evidence="1">
    <location>
        <position position="163"/>
    </location>
    <ligand>
        <name>(2R)-2-phosphoglycerate</name>
        <dbReference type="ChEBI" id="CHEBI:58289"/>
    </ligand>
</feature>
<feature type="binding site" evidence="1">
    <location>
        <position position="242"/>
    </location>
    <ligand>
        <name>Mg(2+)</name>
        <dbReference type="ChEBI" id="CHEBI:18420"/>
    </ligand>
</feature>
<feature type="binding site" evidence="1">
    <location>
        <position position="285"/>
    </location>
    <ligand>
        <name>Mg(2+)</name>
        <dbReference type="ChEBI" id="CHEBI:18420"/>
    </ligand>
</feature>
<feature type="binding site" evidence="1">
    <location>
        <position position="312"/>
    </location>
    <ligand>
        <name>Mg(2+)</name>
        <dbReference type="ChEBI" id="CHEBI:18420"/>
    </ligand>
</feature>
<feature type="binding site" evidence="1">
    <location>
        <position position="337"/>
    </location>
    <ligand>
        <name>(2R)-2-phosphoglycerate</name>
        <dbReference type="ChEBI" id="CHEBI:58289"/>
    </ligand>
</feature>
<feature type="binding site" evidence="1">
    <location>
        <position position="366"/>
    </location>
    <ligand>
        <name>(2R)-2-phosphoglycerate</name>
        <dbReference type="ChEBI" id="CHEBI:58289"/>
    </ligand>
</feature>
<feature type="binding site" evidence="1">
    <location>
        <position position="367"/>
    </location>
    <ligand>
        <name>(2R)-2-phosphoglycerate</name>
        <dbReference type="ChEBI" id="CHEBI:58289"/>
    </ligand>
</feature>
<feature type="binding site" evidence="1">
    <location>
        <position position="388"/>
    </location>
    <ligand>
        <name>(2R)-2-phosphoglycerate</name>
        <dbReference type="ChEBI" id="CHEBI:58289"/>
    </ligand>
</feature>
<gene>
    <name evidence="1" type="primary">eno</name>
    <name type="ordered locus">Daro_2364</name>
</gene>
<protein>
    <recommendedName>
        <fullName evidence="1">Enolase</fullName>
        <ecNumber evidence="1">4.2.1.11</ecNumber>
    </recommendedName>
    <alternativeName>
        <fullName evidence="1">2-phospho-D-glycerate hydro-lyase</fullName>
    </alternativeName>
    <alternativeName>
        <fullName evidence="1">2-phosphoglycerate dehydratase</fullName>
    </alternativeName>
</protein>